<sequence>MTVTAFAAAMHRPFFNGYSTMQDMNSGQGRVNQLGGVFINGRPLPNNIRLKIVEMAADGIRPCVISRQLRVSHGCVSKILNRYQETGSIRPGVIGGSKPRIATPEIENRIEEYKRSSPGMFSWEIREKLIREGVCDRSTAPSVSAISRLVRGRDAPLDNDMSSASGSPAGDGTKASSSCGSDVSGGHHNNGKPSDEDISDCESEPGIALKRKQRRCRTTFSASQLDELERAFERTQYPDIYTREELAQRTNLTEARIQVWFSNRRARLRKQHTSVSGGAPGGAAASVSHVAASSSLPSVVSSVPSMAPLAMMPGSLDPATVYQQQYDFYGSHANISVSAAAPMASSNLSPGITTTPPHHHQFYNPSANTASYIMPGENGNTTPTGNIIVSSYETQLGSVYGTETETHQTMPRNESPNESVSSAFGQLPPTPNSLSAVVSGAGVTSSSGANSGADPSQSLANASAGSEELSAALKVESVDLIAASQSQLYGGWSSMQALRPNAPLSPEDSLNSTSSTSQALDVTAHQMFHPYQHTPQYASYPAPGHAHSHHGHPHAPHPHAHPHPQYAGAHPHYPPPSSSAHFMPQNFNAAAFPSPSKVNYTTMPPQPFYPSWY</sequence>
<proteinExistence type="evidence at protein level"/>
<keyword id="KW-0002">3D-structure</keyword>
<keyword id="KW-0025">Alternative splicing</keyword>
<keyword id="KW-0217">Developmental protein</keyword>
<keyword id="KW-0238">DNA-binding</keyword>
<keyword id="KW-0371">Homeobox</keyword>
<keyword id="KW-0539">Nucleus</keyword>
<keyword id="KW-0562">Pair-rule protein</keyword>
<keyword id="KW-0563">Paired box</keyword>
<keyword id="KW-1185">Reference proteome</keyword>
<keyword id="KW-0677">Repeat</keyword>
<keyword id="KW-0804">Transcription</keyword>
<keyword id="KW-0805">Transcription regulation</keyword>
<feature type="chain" id="PRO_0000050167" description="Segmentation protein paired">
    <location>
        <begin position="1"/>
        <end position="613"/>
    </location>
</feature>
<feature type="DNA-binding region" description="Paired" evidence="2">
    <location>
        <begin position="27"/>
        <end position="153"/>
    </location>
</feature>
<feature type="DNA-binding region" description="Homeobox" evidence="1">
    <location>
        <begin position="213"/>
        <end position="272"/>
    </location>
</feature>
<feature type="region of interest" description="PAI subdomain" evidence="2">
    <location>
        <begin position="30"/>
        <end position="86"/>
    </location>
</feature>
<feature type="region of interest" description="RED subdomain" evidence="2">
    <location>
        <begin position="105"/>
        <end position="153"/>
    </location>
</feature>
<feature type="region of interest" description="Disordered" evidence="3">
    <location>
        <begin position="154"/>
        <end position="202"/>
    </location>
</feature>
<feature type="region of interest" description="Disordered" evidence="3">
    <location>
        <begin position="403"/>
        <end position="461"/>
    </location>
</feature>
<feature type="region of interest" description="Disordered" evidence="3">
    <location>
        <begin position="534"/>
        <end position="584"/>
    </location>
</feature>
<feature type="compositionally biased region" description="Polar residues" evidence="3">
    <location>
        <begin position="403"/>
        <end position="424"/>
    </location>
</feature>
<feature type="compositionally biased region" description="Low complexity" evidence="3">
    <location>
        <begin position="433"/>
        <end position="461"/>
    </location>
</feature>
<feature type="compositionally biased region" description="Basic residues" evidence="3">
    <location>
        <begin position="546"/>
        <end position="562"/>
    </location>
</feature>
<feature type="splice variant" id="VSP_007021" description="In isoform A." evidence="4">
    <location>
        <begin position="1"/>
        <end position="23"/>
    </location>
</feature>
<feature type="sequence variant">
    <original>A</original>
    <variation>T</variation>
    <location>
        <position position="164"/>
    </location>
</feature>
<feature type="sequence variant">
    <original>F</original>
    <variation>I</variation>
    <location>
        <position position="220"/>
    </location>
</feature>
<feature type="strand" evidence="7">
    <location>
        <begin position="29"/>
        <end position="31"/>
    </location>
</feature>
<feature type="strand" evidence="7">
    <location>
        <begin position="37"/>
        <end position="39"/>
    </location>
</feature>
<feature type="helix" evidence="7">
    <location>
        <begin position="46"/>
        <end position="57"/>
    </location>
</feature>
<feature type="helix" evidence="7">
    <location>
        <begin position="62"/>
        <end position="69"/>
    </location>
</feature>
<feature type="helix" evidence="7">
    <location>
        <begin position="73"/>
        <end position="86"/>
    </location>
</feature>
<feature type="helix" evidence="7">
    <location>
        <begin position="106"/>
        <end position="112"/>
    </location>
</feature>
<feature type="turn" evidence="7">
    <location>
        <begin position="113"/>
        <end position="116"/>
    </location>
</feature>
<feature type="helix" evidence="7">
    <location>
        <begin position="122"/>
        <end position="131"/>
    </location>
</feature>
<feature type="strand" evidence="7">
    <location>
        <begin position="133"/>
        <end position="135"/>
    </location>
</feature>
<feature type="helix" evidence="7">
    <location>
        <begin position="143"/>
        <end position="149"/>
    </location>
</feature>
<feature type="helix" evidence="6">
    <location>
        <begin position="222"/>
        <end position="234"/>
    </location>
</feature>
<feature type="helix" evidence="6">
    <location>
        <begin position="240"/>
        <end position="250"/>
    </location>
</feature>
<feature type="helix" evidence="6">
    <location>
        <begin position="254"/>
        <end position="275"/>
    </location>
</feature>
<reference key="1">
    <citation type="journal article" date="1986" name="Cell">
        <title>Structure of the segmentation gene paired and the Drosophila PRD gene set as part of a gene network.</title>
        <authorList>
            <person name="Frigerio G."/>
            <person name="Burri M."/>
            <person name="Bopp D."/>
            <person name="Baumgartner S."/>
            <person name="Noll M."/>
        </authorList>
    </citation>
    <scope>NUCLEOTIDE SEQUENCE [GENOMIC DNA] (ISOFORM B)</scope>
</reference>
<reference key="2">
    <citation type="journal article" date="2000" name="Science">
        <title>The genome sequence of Drosophila melanogaster.</title>
        <authorList>
            <person name="Adams M.D."/>
            <person name="Celniker S.E."/>
            <person name="Holt R.A."/>
            <person name="Evans C.A."/>
            <person name="Gocayne J.D."/>
            <person name="Amanatides P.G."/>
            <person name="Scherer S.E."/>
            <person name="Li P.W."/>
            <person name="Hoskins R.A."/>
            <person name="Galle R.F."/>
            <person name="George R.A."/>
            <person name="Lewis S.E."/>
            <person name="Richards S."/>
            <person name="Ashburner M."/>
            <person name="Henderson S.N."/>
            <person name="Sutton G.G."/>
            <person name="Wortman J.R."/>
            <person name="Yandell M.D."/>
            <person name="Zhang Q."/>
            <person name="Chen L.X."/>
            <person name="Brandon R.C."/>
            <person name="Rogers Y.-H.C."/>
            <person name="Blazej R.G."/>
            <person name="Champe M."/>
            <person name="Pfeiffer B.D."/>
            <person name="Wan K.H."/>
            <person name="Doyle C."/>
            <person name="Baxter E.G."/>
            <person name="Helt G."/>
            <person name="Nelson C.R."/>
            <person name="Miklos G.L.G."/>
            <person name="Abril J.F."/>
            <person name="Agbayani A."/>
            <person name="An H.-J."/>
            <person name="Andrews-Pfannkoch C."/>
            <person name="Baldwin D."/>
            <person name="Ballew R.M."/>
            <person name="Basu A."/>
            <person name="Baxendale J."/>
            <person name="Bayraktaroglu L."/>
            <person name="Beasley E.M."/>
            <person name="Beeson K.Y."/>
            <person name="Benos P.V."/>
            <person name="Berman B.P."/>
            <person name="Bhandari D."/>
            <person name="Bolshakov S."/>
            <person name="Borkova D."/>
            <person name="Botchan M.R."/>
            <person name="Bouck J."/>
            <person name="Brokstein P."/>
            <person name="Brottier P."/>
            <person name="Burtis K.C."/>
            <person name="Busam D.A."/>
            <person name="Butler H."/>
            <person name="Cadieu E."/>
            <person name="Center A."/>
            <person name="Chandra I."/>
            <person name="Cherry J.M."/>
            <person name="Cawley S."/>
            <person name="Dahlke C."/>
            <person name="Davenport L.B."/>
            <person name="Davies P."/>
            <person name="de Pablos B."/>
            <person name="Delcher A."/>
            <person name="Deng Z."/>
            <person name="Mays A.D."/>
            <person name="Dew I."/>
            <person name="Dietz S.M."/>
            <person name="Dodson K."/>
            <person name="Doup L.E."/>
            <person name="Downes M."/>
            <person name="Dugan-Rocha S."/>
            <person name="Dunkov B.C."/>
            <person name="Dunn P."/>
            <person name="Durbin K.J."/>
            <person name="Evangelista C.C."/>
            <person name="Ferraz C."/>
            <person name="Ferriera S."/>
            <person name="Fleischmann W."/>
            <person name="Fosler C."/>
            <person name="Gabrielian A.E."/>
            <person name="Garg N.S."/>
            <person name="Gelbart W.M."/>
            <person name="Glasser K."/>
            <person name="Glodek A."/>
            <person name="Gong F."/>
            <person name="Gorrell J.H."/>
            <person name="Gu Z."/>
            <person name="Guan P."/>
            <person name="Harris M."/>
            <person name="Harris N.L."/>
            <person name="Harvey D.A."/>
            <person name="Heiman T.J."/>
            <person name="Hernandez J.R."/>
            <person name="Houck J."/>
            <person name="Hostin D."/>
            <person name="Houston K.A."/>
            <person name="Howland T.J."/>
            <person name="Wei M.-H."/>
            <person name="Ibegwam C."/>
            <person name="Jalali M."/>
            <person name="Kalush F."/>
            <person name="Karpen G.H."/>
            <person name="Ke Z."/>
            <person name="Kennison J.A."/>
            <person name="Ketchum K.A."/>
            <person name="Kimmel B.E."/>
            <person name="Kodira C.D."/>
            <person name="Kraft C.L."/>
            <person name="Kravitz S."/>
            <person name="Kulp D."/>
            <person name="Lai Z."/>
            <person name="Lasko P."/>
            <person name="Lei Y."/>
            <person name="Levitsky A.A."/>
            <person name="Li J.H."/>
            <person name="Li Z."/>
            <person name="Liang Y."/>
            <person name="Lin X."/>
            <person name="Liu X."/>
            <person name="Mattei B."/>
            <person name="McIntosh T.C."/>
            <person name="McLeod M.P."/>
            <person name="McPherson D."/>
            <person name="Merkulov G."/>
            <person name="Milshina N.V."/>
            <person name="Mobarry C."/>
            <person name="Morris J."/>
            <person name="Moshrefi A."/>
            <person name="Mount S.M."/>
            <person name="Moy M."/>
            <person name="Murphy B."/>
            <person name="Murphy L."/>
            <person name="Muzny D.M."/>
            <person name="Nelson D.L."/>
            <person name="Nelson D.R."/>
            <person name="Nelson K.A."/>
            <person name="Nixon K."/>
            <person name="Nusskern D.R."/>
            <person name="Pacleb J.M."/>
            <person name="Palazzolo M."/>
            <person name="Pittman G.S."/>
            <person name="Pan S."/>
            <person name="Pollard J."/>
            <person name="Puri V."/>
            <person name="Reese M.G."/>
            <person name="Reinert K."/>
            <person name="Remington K."/>
            <person name="Saunders R.D.C."/>
            <person name="Scheeler F."/>
            <person name="Shen H."/>
            <person name="Shue B.C."/>
            <person name="Siden-Kiamos I."/>
            <person name="Simpson M."/>
            <person name="Skupski M.P."/>
            <person name="Smith T.J."/>
            <person name="Spier E."/>
            <person name="Spradling A.C."/>
            <person name="Stapleton M."/>
            <person name="Strong R."/>
            <person name="Sun E."/>
            <person name="Svirskas R."/>
            <person name="Tector C."/>
            <person name="Turner R."/>
            <person name="Venter E."/>
            <person name="Wang A.H."/>
            <person name="Wang X."/>
            <person name="Wang Z.-Y."/>
            <person name="Wassarman D.A."/>
            <person name="Weinstock G.M."/>
            <person name="Weissenbach J."/>
            <person name="Williams S.M."/>
            <person name="Woodage T."/>
            <person name="Worley K.C."/>
            <person name="Wu D."/>
            <person name="Yang S."/>
            <person name="Yao Q.A."/>
            <person name="Ye J."/>
            <person name="Yeh R.-F."/>
            <person name="Zaveri J.S."/>
            <person name="Zhan M."/>
            <person name="Zhang G."/>
            <person name="Zhao Q."/>
            <person name="Zheng L."/>
            <person name="Zheng X.H."/>
            <person name="Zhong F.N."/>
            <person name="Zhong W."/>
            <person name="Zhou X."/>
            <person name="Zhu S.C."/>
            <person name="Zhu X."/>
            <person name="Smith H.O."/>
            <person name="Gibbs R.A."/>
            <person name="Myers E.W."/>
            <person name="Rubin G.M."/>
            <person name="Venter J.C."/>
        </authorList>
    </citation>
    <scope>NUCLEOTIDE SEQUENCE [LARGE SCALE GENOMIC DNA]</scope>
    <source>
        <strain>Berkeley</strain>
    </source>
</reference>
<reference key="3">
    <citation type="journal article" date="2002" name="Genome Biol.">
        <title>Annotation of the Drosophila melanogaster euchromatic genome: a systematic review.</title>
        <authorList>
            <person name="Misra S."/>
            <person name="Crosby M.A."/>
            <person name="Mungall C.J."/>
            <person name="Matthews B.B."/>
            <person name="Campbell K.S."/>
            <person name="Hradecky P."/>
            <person name="Huang Y."/>
            <person name="Kaminker J.S."/>
            <person name="Millburn G.H."/>
            <person name="Prochnik S.E."/>
            <person name="Smith C.D."/>
            <person name="Tupy J.L."/>
            <person name="Whitfield E.J."/>
            <person name="Bayraktaroglu L."/>
            <person name="Berman B.P."/>
            <person name="Bettencourt B.R."/>
            <person name="Celniker S.E."/>
            <person name="de Grey A.D.N.J."/>
            <person name="Drysdale R.A."/>
            <person name="Harris N.L."/>
            <person name="Richter J."/>
            <person name="Russo S."/>
            <person name="Schroeder A.J."/>
            <person name="Shu S.Q."/>
            <person name="Stapleton M."/>
            <person name="Yamada C."/>
            <person name="Ashburner M."/>
            <person name="Gelbart W.M."/>
            <person name="Rubin G.M."/>
            <person name="Lewis S.E."/>
        </authorList>
    </citation>
    <scope>GENOME REANNOTATION</scope>
    <scope>ALTERNATIVE SPLICING</scope>
    <source>
        <strain>Berkeley</strain>
    </source>
</reference>
<reference key="4">
    <citation type="journal article" date="2002" name="Genome Biol.">
        <title>A Drosophila full-length cDNA resource.</title>
        <authorList>
            <person name="Stapleton M."/>
            <person name="Carlson J.W."/>
            <person name="Brokstein P."/>
            <person name="Yu C."/>
            <person name="Champe M."/>
            <person name="George R.A."/>
            <person name="Guarin H."/>
            <person name="Kronmiller B."/>
            <person name="Pacleb J.M."/>
            <person name="Park S."/>
            <person name="Wan K.H."/>
            <person name="Rubin G.M."/>
            <person name="Celniker S.E."/>
        </authorList>
    </citation>
    <scope>NUCLEOTIDE SEQUENCE [LARGE SCALE MRNA] (ISOFORM A)</scope>
    <source>
        <strain>Berkeley</strain>
        <tissue>Head</tissue>
    </source>
</reference>
<reference key="5">
    <citation type="journal article" date="1995" name="Cell">
        <title>Crystal structure of a paired domain-DNA complex at 2.5-A resolution reveals structural basis for Pax developmental mutations.</title>
        <authorList>
            <person name="Xu W."/>
            <person name="Rould M.A."/>
            <person name="Jun S."/>
            <person name="Desplan C."/>
            <person name="Pabo C.O."/>
        </authorList>
    </citation>
    <scope>X-RAY CRYSTALLOGRAPHY (2.5 ANGSTROMS) OF 27-154</scope>
</reference>
<reference key="6">
    <citation type="journal article" date="1995" name="Cell">
        <title>High resolution crystal structure of a paired (Pax) class cooperative homeodomain dimer on DNA.</title>
        <authorList>
            <person name="Wilson D.S."/>
            <person name="Guenther B."/>
            <person name="Desplan C."/>
            <person name="Kuriyan J."/>
        </authorList>
    </citation>
    <scope>X-RAY CRYSTALLOGRAPHY (2.0 ANGSTROMS) OF 196-276</scope>
</reference>
<name>PRD_DROME</name>
<evidence type="ECO:0000255" key="1">
    <source>
        <dbReference type="PROSITE-ProRule" id="PRU00108"/>
    </source>
</evidence>
<evidence type="ECO:0000255" key="2">
    <source>
        <dbReference type="PROSITE-ProRule" id="PRU00381"/>
    </source>
</evidence>
<evidence type="ECO:0000256" key="3">
    <source>
        <dbReference type="SAM" id="MobiDB-lite"/>
    </source>
</evidence>
<evidence type="ECO:0000303" key="4">
    <source>
    </source>
</evidence>
<evidence type="ECO:0000305" key="5"/>
<evidence type="ECO:0007829" key="6">
    <source>
        <dbReference type="PDB" id="1FJL"/>
    </source>
</evidence>
<evidence type="ECO:0007829" key="7">
    <source>
        <dbReference type="PDB" id="1PDN"/>
    </source>
</evidence>
<accession>P06601</accession>
<accession>Q9VKB6</accession>
<comment type="function">
    <text>Pair-rule protein expressed in a segmentally repeating pattern to define the polarity of embryonic segments. Capable of sequence-specific DNA-binding.</text>
</comment>
<comment type="subcellular location">
    <subcellularLocation>
        <location>Nucleus</location>
    </subcellularLocation>
</comment>
<comment type="alternative products">
    <event type="alternative splicing"/>
    <isoform>
        <id>P06601-1</id>
        <name>B</name>
        <sequence type="displayed"/>
    </isoform>
    <isoform>
        <id>P06601-2</id>
        <name>A</name>
        <sequence type="described" ref="VSP_007021"/>
    </isoform>
</comment>
<comment type="similarity">
    <text evidence="5">Belongs to the paired homeobox family.</text>
</comment>
<organism>
    <name type="scientific">Drosophila melanogaster</name>
    <name type="common">Fruit fly</name>
    <dbReference type="NCBI Taxonomy" id="7227"/>
    <lineage>
        <taxon>Eukaryota</taxon>
        <taxon>Metazoa</taxon>
        <taxon>Ecdysozoa</taxon>
        <taxon>Arthropoda</taxon>
        <taxon>Hexapoda</taxon>
        <taxon>Insecta</taxon>
        <taxon>Pterygota</taxon>
        <taxon>Neoptera</taxon>
        <taxon>Endopterygota</taxon>
        <taxon>Diptera</taxon>
        <taxon>Brachycera</taxon>
        <taxon>Muscomorpha</taxon>
        <taxon>Ephydroidea</taxon>
        <taxon>Drosophilidae</taxon>
        <taxon>Drosophila</taxon>
        <taxon>Sophophora</taxon>
    </lineage>
</organism>
<dbReference type="EMBL" id="M14548">
    <property type="protein sequence ID" value="AAB59221.1"/>
    <property type="molecule type" value="Genomic_DNA"/>
</dbReference>
<dbReference type="EMBL" id="AE014134">
    <property type="protein sequence ID" value="AAN10801.1"/>
    <property type="molecule type" value="Genomic_DNA"/>
</dbReference>
<dbReference type="EMBL" id="AE014134">
    <property type="protein sequence ID" value="AAF53160.1"/>
    <property type="molecule type" value="Genomic_DNA"/>
</dbReference>
<dbReference type="EMBL" id="AY059447">
    <property type="protein sequence ID" value="AAL13353.1"/>
    <property type="molecule type" value="mRNA"/>
</dbReference>
<dbReference type="PIR" id="A26062">
    <property type="entry name" value="A26062"/>
</dbReference>
<dbReference type="RefSeq" id="NP_523556.1">
    <molecule id="P06601-2"/>
    <property type="nucleotide sequence ID" value="NM_078832.3"/>
</dbReference>
<dbReference type="RefSeq" id="NP_723721.1">
    <molecule id="P06601-1"/>
    <property type="nucleotide sequence ID" value="NM_164990.3"/>
</dbReference>
<dbReference type="PDB" id="1FJL">
    <property type="method" value="X-ray"/>
    <property type="resolution" value="2.00 A"/>
    <property type="chains" value="A/B/C=196-276"/>
</dbReference>
<dbReference type="PDB" id="1PDN">
    <property type="method" value="X-ray"/>
    <property type="resolution" value="2.50 A"/>
    <property type="chains" value="C=27-154"/>
</dbReference>
<dbReference type="PDBsum" id="1FJL"/>
<dbReference type="PDBsum" id="1PDN"/>
<dbReference type="SMR" id="P06601"/>
<dbReference type="BioGRID" id="60680">
    <property type="interactions" value="17"/>
</dbReference>
<dbReference type="DIP" id="DIP-22888N"/>
<dbReference type="FunCoup" id="P06601">
    <property type="interactions" value="93"/>
</dbReference>
<dbReference type="IntAct" id="P06601">
    <property type="interactions" value="3"/>
</dbReference>
<dbReference type="STRING" id="7227.FBpp0079882"/>
<dbReference type="PaxDb" id="7227-FBpp0079882"/>
<dbReference type="DNASU" id="34629"/>
<dbReference type="EnsemblMetazoa" id="FBtr0080298">
    <molecule id="P06601-1"/>
    <property type="protein sequence ID" value="FBpp0079882"/>
    <property type="gene ID" value="FBgn0003145"/>
</dbReference>
<dbReference type="EnsemblMetazoa" id="FBtr0080299">
    <molecule id="P06601-2"/>
    <property type="protein sequence ID" value="FBpp0079883"/>
    <property type="gene ID" value="FBgn0003145"/>
</dbReference>
<dbReference type="GeneID" id="34629"/>
<dbReference type="KEGG" id="dme:Dmel_CG6716"/>
<dbReference type="UCSC" id="CG6716-RA">
    <molecule id="P06601-1"/>
    <property type="organism name" value="d. melanogaster"/>
</dbReference>
<dbReference type="AGR" id="FB:FBgn0003145"/>
<dbReference type="CTD" id="5548"/>
<dbReference type="FlyBase" id="FBgn0003145">
    <property type="gene designation" value="prd"/>
</dbReference>
<dbReference type="VEuPathDB" id="VectorBase:FBgn0003145"/>
<dbReference type="eggNOG" id="KOG0849">
    <property type="taxonomic scope" value="Eukaryota"/>
</dbReference>
<dbReference type="GeneTree" id="ENSGT00940000168362"/>
<dbReference type="HOGENOM" id="CLU_028364_0_0_1"/>
<dbReference type="InParanoid" id="P06601"/>
<dbReference type="OMA" id="EGFCDRS"/>
<dbReference type="OrthoDB" id="3225452at2759"/>
<dbReference type="PhylomeDB" id="P06601"/>
<dbReference type="Reactome" id="R-DME-3214847">
    <property type="pathway name" value="HATs acetylate histones"/>
</dbReference>
<dbReference type="SignaLink" id="P06601"/>
<dbReference type="BioGRID-ORCS" id="34629">
    <property type="hits" value="0 hits in 3 CRISPR screens"/>
</dbReference>
<dbReference type="EvolutionaryTrace" id="P06601"/>
<dbReference type="GenomeRNAi" id="34629"/>
<dbReference type="PRO" id="PR:P06601"/>
<dbReference type="Proteomes" id="UP000000803">
    <property type="component" value="Chromosome 2L"/>
</dbReference>
<dbReference type="Bgee" id="FBgn0003145">
    <property type="expression patterns" value="Expressed in male accessory gland main cell (Drosophila) in male reproductive gland and 33 other cell types or tissues"/>
</dbReference>
<dbReference type="GO" id="GO:0005634">
    <property type="term" value="C:nucleus"/>
    <property type="evidence" value="ECO:0000303"/>
    <property type="project" value="UniProtKB"/>
</dbReference>
<dbReference type="GO" id="GO:0003677">
    <property type="term" value="F:DNA binding"/>
    <property type="evidence" value="ECO:0000303"/>
    <property type="project" value="UniProtKB"/>
</dbReference>
<dbReference type="GO" id="GO:0000981">
    <property type="term" value="F:DNA-binding transcription factor activity, RNA polymerase II-specific"/>
    <property type="evidence" value="ECO:0000314"/>
    <property type="project" value="FlyBase"/>
</dbReference>
<dbReference type="GO" id="GO:0000978">
    <property type="term" value="F:RNA polymerase II cis-regulatory region sequence-specific DNA binding"/>
    <property type="evidence" value="ECO:0000318"/>
    <property type="project" value="GO_Central"/>
</dbReference>
<dbReference type="GO" id="GO:0000977">
    <property type="term" value="F:RNA polymerase II transcription regulatory region sequence-specific DNA binding"/>
    <property type="evidence" value="ECO:0000314"/>
    <property type="project" value="FlyBase"/>
</dbReference>
<dbReference type="GO" id="GO:0007399">
    <property type="term" value="P:nervous system development"/>
    <property type="evidence" value="ECO:0000318"/>
    <property type="project" value="GO_Central"/>
</dbReference>
<dbReference type="GO" id="GO:0007366">
    <property type="term" value="P:periodic partitioning by pair rule gene"/>
    <property type="evidence" value="ECO:0000304"/>
    <property type="project" value="FlyBase"/>
</dbReference>
<dbReference type="GO" id="GO:0045944">
    <property type="term" value="P:positive regulation of transcription by RNA polymerase II"/>
    <property type="evidence" value="ECO:0000314"/>
    <property type="project" value="FlyBase"/>
</dbReference>
<dbReference type="GO" id="GO:0006355">
    <property type="term" value="P:regulation of DNA-templated transcription"/>
    <property type="evidence" value="ECO:0000303"/>
    <property type="project" value="UniProtKB"/>
</dbReference>
<dbReference type="GO" id="GO:0006357">
    <property type="term" value="P:regulation of transcription by RNA polymerase II"/>
    <property type="evidence" value="ECO:0000318"/>
    <property type="project" value="GO_Central"/>
</dbReference>
<dbReference type="CDD" id="cd00086">
    <property type="entry name" value="homeodomain"/>
    <property type="match status" value="1"/>
</dbReference>
<dbReference type="CDD" id="cd00131">
    <property type="entry name" value="PAX"/>
    <property type="match status" value="1"/>
</dbReference>
<dbReference type="FunFam" id="1.10.10.10:FF:000494">
    <property type="entry name" value="Blast:Protein gooseberry-neuro"/>
    <property type="match status" value="1"/>
</dbReference>
<dbReference type="FunFam" id="1.10.10.60:FF:000679">
    <property type="entry name" value="Homeobox protein aristaless"/>
    <property type="match status" value="1"/>
</dbReference>
<dbReference type="FunFam" id="1.10.10.10:FF:000031">
    <property type="entry name" value="Paired box protein Pax-7"/>
    <property type="match status" value="1"/>
</dbReference>
<dbReference type="Gene3D" id="1.10.10.60">
    <property type="entry name" value="Homeodomain-like"/>
    <property type="match status" value="1"/>
</dbReference>
<dbReference type="Gene3D" id="1.10.10.10">
    <property type="entry name" value="Winged helix-like DNA-binding domain superfamily/Winged helix DNA-binding domain"/>
    <property type="match status" value="2"/>
</dbReference>
<dbReference type="InterPro" id="IPR001356">
    <property type="entry name" value="HD"/>
</dbReference>
<dbReference type="InterPro" id="IPR017970">
    <property type="entry name" value="Homeobox_CS"/>
</dbReference>
<dbReference type="InterPro" id="IPR009057">
    <property type="entry name" value="Homeodomain-like_sf"/>
</dbReference>
<dbReference type="InterPro" id="IPR043182">
    <property type="entry name" value="PAIRED_DNA-bd_dom"/>
</dbReference>
<dbReference type="InterPro" id="IPR001523">
    <property type="entry name" value="Paired_dom"/>
</dbReference>
<dbReference type="InterPro" id="IPR043565">
    <property type="entry name" value="PAX_fam"/>
</dbReference>
<dbReference type="InterPro" id="IPR036388">
    <property type="entry name" value="WH-like_DNA-bd_sf"/>
</dbReference>
<dbReference type="PANTHER" id="PTHR45636">
    <property type="entry name" value="PAIRED BOX PROTEIN PAX-6-RELATED-RELATED"/>
    <property type="match status" value="1"/>
</dbReference>
<dbReference type="PANTHER" id="PTHR45636:SF3">
    <property type="entry name" value="PROTEIN GOOSEBERRY-RELATED"/>
    <property type="match status" value="1"/>
</dbReference>
<dbReference type="Pfam" id="PF00046">
    <property type="entry name" value="Homeodomain"/>
    <property type="match status" value="1"/>
</dbReference>
<dbReference type="Pfam" id="PF00292">
    <property type="entry name" value="PAX"/>
    <property type="match status" value="1"/>
</dbReference>
<dbReference type="PRINTS" id="PR00027">
    <property type="entry name" value="PAIREDBOX"/>
</dbReference>
<dbReference type="SMART" id="SM00389">
    <property type="entry name" value="HOX"/>
    <property type="match status" value="1"/>
</dbReference>
<dbReference type="SMART" id="SM00351">
    <property type="entry name" value="PAX"/>
    <property type="match status" value="1"/>
</dbReference>
<dbReference type="SUPFAM" id="SSF46689">
    <property type="entry name" value="Homeodomain-like"/>
    <property type="match status" value="2"/>
</dbReference>
<dbReference type="PROSITE" id="PS00027">
    <property type="entry name" value="HOMEOBOX_1"/>
    <property type="match status" value="1"/>
</dbReference>
<dbReference type="PROSITE" id="PS50071">
    <property type="entry name" value="HOMEOBOX_2"/>
    <property type="match status" value="1"/>
</dbReference>
<dbReference type="PROSITE" id="PS00034">
    <property type="entry name" value="PAIRED_1"/>
    <property type="match status" value="1"/>
</dbReference>
<dbReference type="PROSITE" id="PS51057">
    <property type="entry name" value="PAIRED_2"/>
    <property type="match status" value="1"/>
</dbReference>
<protein>
    <recommendedName>
        <fullName>Segmentation protein paired</fullName>
    </recommendedName>
</protein>
<gene>
    <name type="primary">prd</name>
    <name type="ORF">CG6716</name>
</gene>